<comment type="subcellular location">
    <subcellularLocation>
        <location evidence="1">Cell membrane</location>
        <topology evidence="2">Multi-pass membrane protein</topology>
    </subcellularLocation>
</comment>
<comment type="alternative products">
    <event type="alternative splicing"/>
    <isoform>
        <id>Q5GH73-1</id>
        <name>1</name>
        <sequence type="displayed"/>
    </isoform>
    <isoform>
        <id>Q5GH73-2</id>
        <name>2</name>
        <sequence type="described" ref="VSP_014663"/>
    </isoform>
</comment>
<comment type="similarity">
    <text evidence="6">Belongs to the XK family.</text>
</comment>
<name>XKR6_HUMAN</name>
<gene>
    <name evidence="7" type="primary">XKR6</name>
    <name evidence="7" type="synonym">C8orf21</name>
    <name evidence="7" type="synonym">C8orf5</name>
    <name evidence="7" type="synonym">C8orf7</name>
    <name evidence="5" type="synonym">XRG6</name>
</gene>
<proteinExistence type="evidence at protein level"/>
<protein>
    <recommendedName>
        <fullName evidence="6">XK-related protein 6</fullName>
    </recommendedName>
</protein>
<reference key="1">
    <citation type="submission" date="2004-01" db="EMBL/GenBank/DDBJ databases">
        <title>A superfamily of XK-related genes (XRG) widely expressed in vertebrates and invertebrates.</title>
        <authorList>
            <person name="Huang C.-H."/>
            <person name="Chen Y."/>
        </authorList>
    </citation>
    <scope>NUCLEOTIDE SEQUENCE [MRNA] (ISOFORM 1)</scope>
</reference>
<reference key="2">
    <citation type="journal article" date="2004" name="Genome Res.">
        <title>The status, quality, and expansion of the NIH full-length cDNA project: the Mammalian Gene Collection (MGC).</title>
        <authorList>
            <consortium name="The MGC Project Team"/>
        </authorList>
    </citation>
    <scope>NUCLEOTIDE SEQUENCE [LARGE SCALE MRNA] (ISOFORM 2)</scope>
    <source>
        <tissue>Lymph</tissue>
    </source>
</reference>
<dbReference type="EMBL" id="AY534244">
    <property type="protein sequence ID" value="AAT07093.1"/>
    <property type="molecule type" value="mRNA"/>
</dbReference>
<dbReference type="EMBL" id="BC024146">
    <property type="protein sequence ID" value="AAH24146.1"/>
    <property type="molecule type" value="mRNA"/>
</dbReference>
<dbReference type="CCDS" id="CCDS5978.2">
    <molecule id="Q5GH73-1"/>
</dbReference>
<dbReference type="RefSeq" id="NP_775954.2">
    <molecule id="Q5GH73-1"/>
    <property type="nucleotide sequence ID" value="NM_173683.4"/>
</dbReference>
<dbReference type="SMR" id="Q5GH73"/>
<dbReference type="BioGRID" id="130280">
    <property type="interactions" value="7"/>
</dbReference>
<dbReference type="FunCoup" id="Q5GH73">
    <property type="interactions" value="596"/>
</dbReference>
<dbReference type="IntAct" id="Q5GH73">
    <property type="interactions" value="5"/>
</dbReference>
<dbReference type="STRING" id="9606.ENSP00000416707"/>
<dbReference type="GlyGen" id="Q5GH73">
    <property type="glycosylation" value="2 sites"/>
</dbReference>
<dbReference type="iPTMnet" id="Q5GH73"/>
<dbReference type="PhosphoSitePlus" id="Q5GH73"/>
<dbReference type="BioMuta" id="XKR6"/>
<dbReference type="DMDM" id="71153416"/>
<dbReference type="MassIVE" id="Q5GH73"/>
<dbReference type="PaxDb" id="9606-ENSP00000416707"/>
<dbReference type="PeptideAtlas" id="Q5GH73"/>
<dbReference type="ProteomicsDB" id="62832">
    <molecule id="Q5GH73-1"/>
</dbReference>
<dbReference type="ProteomicsDB" id="62833">
    <molecule id="Q5GH73-2"/>
</dbReference>
<dbReference type="Antibodypedia" id="8456">
    <property type="antibodies" value="39 antibodies from 14 providers"/>
</dbReference>
<dbReference type="DNASU" id="286046"/>
<dbReference type="Ensembl" id="ENST00000416569.3">
    <molecule id="Q5GH73-1"/>
    <property type="protein sequence ID" value="ENSP00000416707.2"/>
    <property type="gene ID" value="ENSG00000171044.11"/>
</dbReference>
<dbReference type="GeneID" id="286046"/>
<dbReference type="KEGG" id="hsa:286046"/>
<dbReference type="MANE-Select" id="ENST00000416569.3">
    <property type="protein sequence ID" value="ENSP00000416707.2"/>
    <property type="RefSeq nucleotide sequence ID" value="NM_173683.4"/>
    <property type="RefSeq protein sequence ID" value="NP_775954.2"/>
</dbReference>
<dbReference type="UCSC" id="uc003wtk.3">
    <molecule id="Q5GH73-1"/>
    <property type="organism name" value="human"/>
</dbReference>
<dbReference type="AGR" id="HGNC:27806"/>
<dbReference type="CTD" id="286046"/>
<dbReference type="DisGeNET" id="286046"/>
<dbReference type="GeneCards" id="XKR6"/>
<dbReference type="HGNC" id="HGNC:27806">
    <property type="gene designation" value="XKR6"/>
</dbReference>
<dbReference type="HPA" id="ENSG00000171044">
    <property type="expression patterns" value="Low tissue specificity"/>
</dbReference>
<dbReference type="neXtProt" id="NX_Q5GH73"/>
<dbReference type="OpenTargets" id="ENSG00000171044"/>
<dbReference type="PharmGKB" id="PA134922549"/>
<dbReference type="VEuPathDB" id="HostDB:ENSG00000171044"/>
<dbReference type="eggNOG" id="KOG4790">
    <property type="taxonomic scope" value="Eukaryota"/>
</dbReference>
<dbReference type="GeneTree" id="ENSGT01110000267146"/>
<dbReference type="HOGENOM" id="CLU_028534_1_0_1"/>
<dbReference type="InParanoid" id="Q5GH73"/>
<dbReference type="OMA" id="VWVWQTI"/>
<dbReference type="OrthoDB" id="6356248at2759"/>
<dbReference type="PAN-GO" id="Q5GH73">
    <property type="GO annotations" value="4 GO annotations based on evolutionary models"/>
</dbReference>
<dbReference type="PhylomeDB" id="Q5GH73"/>
<dbReference type="TreeFam" id="TF316454"/>
<dbReference type="PathwayCommons" id="Q5GH73"/>
<dbReference type="SignaLink" id="Q5GH73"/>
<dbReference type="BioGRID-ORCS" id="286046">
    <property type="hits" value="14 hits in 1144 CRISPR screens"/>
</dbReference>
<dbReference type="ChiTaRS" id="XKR6">
    <property type="organism name" value="human"/>
</dbReference>
<dbReference type="GenomeRNAi" id="286046"/>
<dbReference type="Pharos" id="Q5GH73">
    <property type="development level" value="Tdark"/>
</dbReference>
<dbReference type="PRO" id="PR:Q5GH73"/>
<dbReference type="Proteomes" id="UP000005640">
    <property type="component" value="Chromosome 8"/>
</dbReference>
<dbReference type="RNAct" id="Q5GH73">
    <property type="molecule type" value="protein"/>
</dbReference>
<dbReference type="Bgee" id="ENSG00000171044">
    <property type="expression patterns" value="Expressed in buccal mucosa cell and 107 other cell types or tissues"/>
</dbReference>
<dbReference type="ExpressionAtlas" id="Q5GH73">
    <property type="expression patterns" value="baseline and differential"/>
</dbReference>
<dbReference type="GO" id="GO:0005886">
    <property type="term" value="C:plasma membrane"/>
    <property type="evidence" value="ECO:0000250"/>
    <property type="project" value="UniProtKB"/>
</dbReference>
<dbReference type="GO" id="GO:1902742">
    <property type="term" value="P:apoptotic process involved in development"/>
    <property type="evidence" value="ECO:0000318"/>
    <property type="project" value="GO_Central"/>
</dbReference>
<dbReference type="GO" id="GO:0043652">
    <property type="term" value="P:engulfment of apoptotic cell"/>
    <property type="evidence" value="ECO:0000318"/>
    <property type="project" value="GO_Central"/>
</dbReference>
<dbReference type="GO" id="GO:0070782">
    <property type="term" value="P:phosphatidylserine exposure on apoptotic cell surface"/>
    <property type="evidence" value="ECO:0000318"/>
    <property type="project" value="GO_Central"/>
</dbReference>
<dbReference type="InterPro" id="IPR018629">
    <property type="entry name" value="XK-rel"/>
</dbReference>
<dbReference type="InterPro" id="IPR050895">
    <property type="entry name" value="XK-related_scramblase"/>
</dbReference>
<dbReference type="PANTHER" id="PTHR16024">
    <property type="entry name" value="XK-RELATED PROTEIN"/>
    <property type="match status" value="1"/>
</dbReference>
<dbReference type="PANTHER" id="PTHR16024:SF9">
    <property type="entry name" value="XK-RELATED PROTEIN 6"/>
    <property type="match status" value="1"/>
</dbReference>
<dbReference type="Pfam" id="PF09815">
    <property type="entry name" value="XK-related"/>
    <property type="match status" value="1"/>
</dbReference>
<evidence type="ECO:0000250" key="1">
    <source>
        <dbReference type="UniProtKB" id="E9Q6C8"/>
    </source>
</evidence>
<evidence type="ECO:0000255" key="2"/>
<evidence type="ECO:0000256" key="3">
    <source>
        <dbReference type="SAM" id="MobiDB-lite"/>
    </source>
</evidence>
<evidence type="ECO:0000303" key="4">
    <source>
    </source>
</evidence>
<evidence type="ECO:0000303" key="5">
    <source ref="1"/>
</evidence>
<evidence type="ECO:0000305" key="6"/>
<evidence type="ECO:0000312" key="7">
    <source>
        <dbReference type="HGNC" id="HGNC:27806"/>
    </source>
</evidence>
<sequence>MAAKSDGGGVGVGFAQLHNLDEAVGSGGEEDGEPGGGGCGGGGDGSEPGESSSMHICHCCNTSSCYWGCRSACLRSLLGRKPRRSAAADGGDQPLQPPAAPGAGRQPPTPSAARPEPPPPQVERPWLDCLWIVLALLVFFGDVGTDLWLALDYYRKGDYVYFGLTLFFVLVPSLLVQSLSFRWFVQDYTGGGLGAVEGLTSRGPPMMGAGYVHGAARGGPGVRVSPTPGAQRLCRLSVWIWQSVIHLLQMGQVWRYIRTMYLGIQSQRRKEHQRRFYWAMMYEYADVNMLRLLETFLESAPQLVLQLYIMLQKNSAETLPCVSSVTSLMSLAWVLASYHKLLRDSRDDKKSMSYRGAIIQVFWRLFTISSRVISFALFASIFQLYFGIFVVVHWCAMAFWIIHGGTDFCMSKWEEILFNMVVGIVYIFCWFNVKEGRTRYRMFAYYTIVLTENAALTFLWYFYRDPETTDSYAVPALCCVFISFVAGIAMMLLYYGVLHPTGPRAKILASSCCAELLWGIPLPPDVEPMAPEIPGYRGTQVTPTRAVTEQQEDLTADTCLPVFQVRPMGPPTPLGRPYLPEGPLIKIDMPRKRYPAWDAHFVDRRLRRTINILQYVTPTAVGIRYRDGPLLYELLQYESSL</sequence>
<accession>Q5GH73</accession>
<accession>Q8TBA0</accession>
<organism>
    <name type="scientific">Homo sapiens</name>
    <name type="common">Human</name>
    <dbReference type="NCBI Taxonomy" id="9606"/>
    <lineage>
        <taxon>Eukaryota</taxon>
        <taxon>Metazoa</taxon>
        <taxon>Chordata</taxon>
        <taxon>Craniata</taxon>
        <taxon>Vertebrata</taxon>
        <taxon>Euteleostomi</taxon>
        <taxon>Mammalia</taxon>
        <taxon>Eutheria</taxon>
        <taxon>Euarchontoglires</taxon>
        <taxon>Primates</taxon>
        <taxon>Haplorrhini</taxon>
        <taxon>Catarrhini</taxon>
        <taxon>Hominidae</taxon>
        <taxon>Homo</taxon>
    </lineage>
</organism>
<keyword id="KW-0025">Alternative splicing</keyword>
<keyword id="KW-1003">Cell membrane</keyword>
<keyword id="KW-0472">Membrane</keyword>
<keyword id="KW-1267">Proteomics identification</keyword>
<keyword id="KW-1185">Reference proteome</keyword>
<keyword id="KW-0812">Transmembrane</keyword>
<keyword id="KW-1133">Transmembrane helix</keyword>
<feature type="chain" id="PRO_0000190785" description="XK-related protein 6">
    <location>
        <begin position="1"/>
        <end position="641"/>
    </location>
</feature>
<feature type="transmembrane region" description="Helical" evidence="2">
    <location>
        <begin position="130"/>
        <end position="150"/>
    </location>
</feature>
<feature type="transmembrane region" description="Helical" evidence="2">
    <location>
        <begin position="159"/>
        <end position="179"/>
    </location>
</feature>
<feature type="transmembrane region" description="Helical" evidence="2">
    <location>
        <begin position="318"/>
        <end position="338"/>
    </location>
</feature>
<feature type="transmembrane region" description="Helical" evidence="2">
    <location>
        <begin position="372"/>
        <end position="392"/>
    </location>
</feature>
<feature type="transmembrane region" description="Helical" evidence="2">
    <location>
        <begin position="413"/>
        <end position="433"/>
    </location>
</feature>
<feature type="transmembrane region" description="Helical" evidence="2">
    <location>
        <begin position="442"/>
        <end position="462"/>
    </location>
</feature>
<feature type="transmembrane region" description="Helical" evidence="2">
    <location>
        <begin position="473"/>
        <end position="493"/>
    </location>
</feature>
<feature type="region of interest" description="Disordered" evidence="3">
    <location>
        <begin position="20"/>
        <end position="47"/>
    </location>
</feature>
<feature type="region of interest" description="Disordered" evidence="3">
    <location>
        <begin position="84"/>
        <end position="120"/>
    </location>
</feature>
<feature type="compositionally biased region" description="Gly residues" evidence="3">
    <location>
        <begin position="34"/>
        <end position="46"/>
    </location>
</feature>
<feature type="compositionally biased region" description="Pro residues" evidence="3">
    <location>
        <begin position="107"/>
        <end position="120"/>
    </location>
</feature>
<feature type="splice variant" id="VSP_014663" description="In isoform 2." evidence="4">
    <location>
        <begin position="1"/>
        <end position="279"/>
    </location>
</feature>